<name>LRX1_ARATH</name>
<sequence>MLFPPLRSLFLFTLLLSSVCFLQIKADHDDESDLGSDIKVDKRLKFENPKLRQAYIALQSWKKAIFSDPFNFTANWNGSDVCSYNGIYCAPSPSYPKTRVVAGIDLNHADMAGYLASELGLLSDLALFHINSNRFCGEVPLTFNRMKLLYELDLSNNRFVGKFPKVVLSLPSLKFLDLRYNEFEGKIPSKLFDRELDAIFLNHNRFRFGIPKNMGNSPVSALVLADNNLGGCIPGSIGQMGKTLNELILSNDNLTGCLPPQIGNLKKVTVFDITSNRLQGPLPSSVGNMKSLEELHVANNAFTGVIPPSICQLSNLENFTYSSNYFSGRPPICAASLLADIVVNGTMNCITGLARQRSDKQCSSLLARPVDCSKFGCYNIFSPPPPTFKMSPEVRTLPPPIYVYSSPPPPPSSKMSPTVRAYSPPPPPSSKMSPSVRAYSPPPPPYSKMSPSVRAYPPPPPPSPSPPPPYVYSSPPPPYVYSSPPPPPYVYSSPPPPPYVYSSPPPPYVYSSPPPPYVYSSPPPPPPSPPPPCPESSPPPPVVYYAPVTQSPPPPSPVYYPPVTQSPPPPSPVYYPPVTNSPPPPSPVYYPPVTYSPPPPSPVYYPQVTPSPPPPSPLYYPPVTPSPPPPSPVYYPPVTPSPPPPSPVYYPPVTPSPPPPSPVYYPSETQSPPPPTEYYYSPSQSPPPTKACKEGHPPQATPSYEPPPEYSYSSSPPPPSPTSYFPPMPSVSYDASPPPPPSYY</sequence>
<reference key="1">
    <citation type="journal article" date="2001" name="Genes Dev.">
        <title>The chimeric leucine-rich repeat/extensin cell wall protein LRX1 is required for root hair morphogenesis in Arabidopsis thaliana.</title>
        <authorList>
            <person name="Baumberger N."/>
            <person name="Ringli C."/>
            <person name="Keller B."/>
        </authorList>
    </citation>
    <scope>NUCLEOTIDE SEQUENCE [MRNA]</scope>
    <scope>FUNCTION</scope>
    <scope>TISSUE SPECIFICITY</scope>
    <scope>DEVELOPMENTAL STAGE</scope>
    <scope>SUBCELLULAR LOCATION</scope>
    <scope>DISRUPTION PHENOTYPE</scope>
    <source>
        <strain>cv. Columbia</strain>
    </source>
</reference>
<reference key="2">
    <citation type="journal article" date="2000" name="Nature">
        <title>Sequence and analysis of chromosome 1 of the plant Arabidopsis thaliana.</title>
        <authorList>
            <person name="Theologis A."/>
            <person name="Ecker J.R."/>
            <person name="Palm C.J."/>
            <person name="Federspiel N.A."/>
            <person name="Kaul S."/>
            <person name="White O."/>
            <person name="Alonso J."/>
            <person name="Altafi H."/>
            <person name="Araujo R."/>
            <person name="Bowman C.L."/>
            <person name="Brooks S.Y."/>
            <person name="Buehler E."/>
            <person name="Chan A."/>
            <person name="Chao Q."/>
            <person name="Chen H."/>
            <person name="Cheuk R.F."/>
            <person name="Chin C.W."/>
            <person name="Chung M.K."/>
            <person name="Conn L."/>
            <person name="Conway A.B."/>
            <person name="Conway A.R."/>
            <person name="Creasy T.H."/>
            <person name="Dewar K."/>
            <person name="Dunn P."/>
            <person name="Etgu P."/>
            <person name="Feldblyum T.V."/>
            <person name="Feng J.-D."/>
            <person name="Fong B."/>
            <person name="Fujii C.Y."/>
            <person name="Gill J.E."/>
            <person name="Goldsmith A.D."/>
            <person name="Haas B."/>
            <person name="Hansen N.F."/>
            <person name="Hughes B."/>
            <person name="Huizar L."/>
            <person name="Hunter J.L."/>
            <person name="Jenkins J."/>
            <person name="Johnson-Hopson C."/>
            <person name="Khan S."/>
            <person name="Khaykin E."/>
            <person name="Kim C.J."/>
            <person name="Koo H.L."/>
            <person name="Kremenetskaia I."/>
            <person name="Kurtz D.B."/>
            <person name="Kwan A."/>
            <person name="Lam B."/>
            <person name="Langin-Hooper S."/>
            <person name="Lee A."/>
            <person name="Lee J.M."/>
            <person name="Lenz C.A."/>
            <person name="Li J.H."/>
            <person name="Li Y.-P."/>
            <person name="Lin X."/>
            <person name="Liu S.X."/>
            <person name="Liu Z.A."/>
            <person name="Luros J.S."/>
            <person name="Maiti R."/>
            <person name="Marziali A."/>
            <person name="Militscher J."/>
            <person name="Miranda M."/>
            <person name="Nguyen M."/>
            <person name="Nierman W.C."/>
            <person name="Osborne B.I."/>
            <person name="Pai G."/>
            <person name="Peterson J."/>
            <person name="Pham P.K."/>
            <person name="Rizzo M."/>
            <person name="Rooney T."/>
            <person name="Rowley D."/>
            <person name="Sakano H."/>
            <person name="Salzberg S.L."/>
            <person name="Schwartz J.R."/>
            <person name="Shinn P."/>
            <person name="Southwick A.M."/>
            <person name="Sun H."/>
            <person name="Tallon L.J."/>
            <person name="Tambunga G."/>
            <person name="Toriumi M.J."/>
            <person name="Town C.D."/>
            <person name="Utterback T."/>
            <person name="Van Aken S."/>
            <person name="Vaysberg M."/>
            <person name="Vysotskaia V.S."/>
            <person name="Walker M."/>
            <person name="Wu D."/>
            <person name="Yu G."/>
            <person name="Fraser C.M."/>
            <person name="Venter J.C."/>
            <person name="Davis R.W."/>
        </authorList>
    </citation>
    <scope>NUCLEOTIDE SEQUENCE [LARGE SCALE GENOMIC DNA]</scope>
    <source>
        <strain>cv. Columbia</strain>
    </source>
</reference>
<reference key="3">
    <citation type="journal article" date="2017" name="Plant J.">
        <title>Araport11: a complete reannotation of the Arabidopsis thaliana reference genome.</title>
        <authorList>
            <person name="Cheng C.Y."/>
            <person name="Krishnakumar V."/>
            <person name="Chan A.P."/>
            <person name="Thibaud-Nissen F."/>
            <person name="Schobel S."/>
            <person name="Town C.D."/>
        </authorList>
    </citation>
    <scope>GENOME REANNOTATION</scope>
    <source>
        <strain>cv. Columbia</strain>
    </source>
</reference>
<reference key="4">
    <citation type="journal article" date="2003" name="Plant J.">
        <title>Synergistic interaction of the two paralogous Arabidopsis genes LRX1 and LRX2 in cell wall formation during root hair development.</title>
        <authorList>
            <person name="Baumberger N."/>
            <person name="Steiner M."/>
            <person name="Ryser U."/>
            <person name="Keller B."/>
            <person name="Ringli C."/>
        </authorList>
    </citation>
    <scope>FUNCTION</scope>
    <scope>DISRUPTION PHENOTYPE</scope>
</reference>
<reference key="5">
    <citation type="journal article" date="2003" name="Plant Physiol.">
        <title>Whole-genome comparison of leucine-rich repeat extensins in Arabidopsis and rice. A conserved family of cell wall proteins form a vegetative and a reproductive clade.</title>
        <authorList>
            <person name="Baumberger N."/>
            <person name="Doesseger B."/>
            <person name="Guyot R."/>
            <person name="Diet A."/>
            <person name="Parsons R.L."/>
            <person name="Clark M.A."/>
            <person name="Simmons M.P."/>
            <person name="Bedinger P."/>
            <person name="Goff S.A."/>
            <person name="Ringli C."/>
            <person name="Keller B."/>
        </authorList>
    </citation>
    <scope>GENE FAMILY</scope>
    <scope>NOMENCLATURE</scope>
</reference>
<gene>
    <name type="primary">LRX1</name>
    <name type="ordered locus">At1g12040</name>
    <name type="ORF">F12F1.9</name>
</gene>
<proteinExistence type="evidence at protein level"/>
<evidence type="ECO:0000250" key="1"/>
<evidence type="ECO:0000255" key="2"/>
<evidence type="ECO:0000256" key="3">
    <source>
        <dbReference type="SAM" id="MobiDB-lite"/>
    </source>
</evidence>
<evidence type="ECO:0000269" key="4">
    <source>
    </source>
</evidence>
<evidence type="ECO:0000269" key="5">
    <source>
    </source>
</evidence>
<dbReference type="EMBL" id="AY026364">
    <property type="protein sequence ID" value="AAK07681.1"/>
    <property type="molecule type" value="mRNA"/>
</dbReference>
<dbReference type="EMBL" id="AC002131">
    <property type="protein sequence ID" value="AAC17609.1"/>
    <property type="molecule type" value="Genomic_DNA"/>
</dbReference>
<dbReference type="EMBL" id="CP002684">
    <property type="protein sequence ID" value="AEE28829.1"/>
    <property type="molecule type" value="Genomic_DNA"/>
</dbReference>
<dbReference type="PIR" id="E86255">
    <property type="entry name" value="E86255"/>
</dbReference>
<dbReference type="RefSeq" id="NP_172668.1">
    <property type="nucleotide sequence ID" value="NM_101076.2"/>
</dbReference>
<dbReference type="SMR" id="O65375"/>
<dbReference type="FunCoup" id="O65375">
    <property type="interactions" value="174"/>
</dbReference>
<dbReference type="STRING" id="3702.O65375"/>
<dbReference type="GlyCosmos" id="O65375">
    <property type="glycosylation" value="5 sites, No reported glycans"/>
</dbReference>
<dbReference type="GlyGen" id="O65375">
    <property type="glycosylation" value="10 sites"/>
</dbReference>
<dbReference type="PaxDb" id="3702-AT1G12040.1"/>
<dbReference type="ProteomicsDB" id="238635"/>
<dbReference type="EnsemblPlants" id="AT1G12040.1">
    <property type="protein sequence ID" value="AT1G12040.1"/>
    <property type="gene ID" value="AT1G12040"/>
</dbReference>
<dbReference type="GeneID" id="837756"/>
<dbReference type="Gramene" id="AT1G12040.1">
    <property type="protein sequence ID" value="AT1G12040.1"/>
    <property type="gene ID" value="AT1G12040"/>
</dbReference>
<dbReference type="KEGG" id="ath:AT1G12040"/>
<dbReference type="Araport" id="AT1G12040"/>
<dbReference type="TAIR" id="AT1G12040">
    <property type="gene designation" value="LRX1"/>
</dbReference>
<dbReference type="eggNOG" id="ENOG502QQD2">
    <property type="taxonomic scope" value="Eukaryota"/>
</dbReference>
<dbReference type="HOGENOM" id="CLU_000288_23_3_1"/>
<dbReference type="InParanoid" id="O65375"/>
<dbReference type="OMA" id="TYADNFI"/>
<dbReference type="PRO" id="PR:O65375"/>
<dbReference type="Proteomes" id="UP000006548">
    <property type="component" value="Chromosome 1"/>
</dbReference>
<dbReference type="ExpressionAtlas" id="O65375">
    <property type="expression patterns" value="baseline and differential"/>
</dbReference>
<dbReference type="GO" id="GO:0005576">
    <property type="term" value="C:extracellular region"/>
    <property type="evidence" value="ECO:0007669"/>
    <property type="project" value="UniProtKB-KW"/>
</dbReference>
<dbReference type="GO" id="GO:0009505">
    <property type="term" value="C:plant-type cell wall"/>
    <property type="evidence" value="ECO:0000314"/>
    <property type="project" value="TAIR"/>
</dbReference>
<dbReference type="GO" id="GO:0009506">
    <property type="term" value="C:plasmodesma"/>
    <property type="evidence" value="ECO:0007005"/>
    <property type="project" value="TAIR"/>
</dbReference>
<dbReference type="GO" id="GO:0005199">
    <property type="term" value="F:structural constituent of cell wall"/>
    <property type="evidence" value="ECO:0000250"/>
    <property type="project" value="TAIR"/>
</dbReference>
<dbReference type="GO" id="GO:0071555">
    <property type="term" value="P:cell wall organization"/>
    <property type="evidence" value="ECO:0007669"/>
    <property type="project" value="UniProtKB-KW"/>
</dbReference>
<dbReference type="GO" id="GO:0010054">
    <property type="term" value="P:trichoblast differentiation"/>
    <property type="evidence" value="ECO:0000315"/>
    <property type="project" value="TAIR"/>
</dbReference>
<dbReference type="GO" id="GO:0009826">
    <property type="term" value="P:unidimensional cell growth"/>
    <property type="evidence" value="ECO:0000315"/>
    <property type="project" value="TAIR"/>
</dbReference>
<dbReference type="FunFam" id="3.80.10.10:FF:000224">
    <property type="entry name" value="Leucine-rich repeat extensin-like protein 1"/>
    <property type="match status" value="1"/>
</dbReference>
<dbReference type="FunFam" id="3.80.10.10:FF:001223">
    <property type="entry name" value="Leucine-rich repeat extensin-like protein 1"/>
    <property type="match status" value="1"/>
</dbReference>
<dbReference type="Gene3D" id="3.80.10.10">
    <property type="entry name" value="Ribonuclease Inhibitor"/>
    <property type="match status" value="2"/>
</dbReference>
<dbReference type="InterPro" id="IPR001611">
    <property type="entry name" value="Leu-rich_rpt"/>
</dbReference>
<dbReference type="InterPro" id="IPR032675">
    <property type="entry name" value="LRR_dom_sf"/>
</dbReference>
<dbReference type="InterPro" id="IPR051582">
    <property type="entry name" value="LRR_extensin-like_regulator"/>
</dbReference>
<dbReference type="InterPro" id="IPR013210">
    <property type="entry name" value="LRR_N_plant-typ"/>
</dbReference>
<dbReference type="PANTHER" id="PTHR32093:SF116">
    <property type="entry name" value="LEUCINE-RICH REPEAT EXTENSIN-LIKE PROTEIN 1"/>
    <property type="match status" value="1"/>
</dbReference>
<dbReference type="PANTHER" id="PTHR32093">
    <property type="entry name" value="LEUCINE-RICH REPEAT EXTENSIN-LIKE PROTEIN 3-RELATED"/>
    <property type="match status" value="1"/>
</dbReference>
<dbReference type="Pfam" id="PF00560">
    <property type="entry name" value="LRR_1"/>
    <property type="match status" value="3"/>
</dbReference>
<dbReference type="Pfam" id="PF08263">
    <property type="entry name" value="LRRNT_2"/>
    <property type="match status" value="1"/>
</dbReference>
<dbReference type="PRINTS" id="PR01217">
    <property type="entry name" value="PRICHEXTENSN"/>
</dbReference>
<dbReference type="SUPFAM" id="SSF52058">
    <property type="entry name" value="L domain-like"/>
    <property type="match status" value="1"/>
</dbReference>
<accession>O65375</accession>
<comment type="function">
    <text evidence="4 5">Modulates cell morphogenesis by regulating cell wall formation and assembly, and/or growth polarization. Together with LRX2, component of the extracellular mechanism regulating root hair morphogenesis and elongation.</text>
</comment>
<comment type="subcellular location">
    <subcellularLocation>
        <location evidence="4">Secreted</location>
        <location evidence="4">Cell wall</location>
    </subcellularLocation>
    <text>Specifically localized in the wall of the root hair proper.</text>
</comment>
<comment type="tissue specificity">
    <text evidence="4">Expressed in root hair cells (at protein level).</text>
</comment>
<comment type="developmental stage">
    <text evidence="4">First observed in differentiating trichoblast and later confined to root hair proper. Soluble in the early stages of root hair development and becomes insolubilized in later stages.</text>
</comment>
<comment type="PTM">
    <text evidence="1">Hydroxylated on proline residues in the S-P-P-P-P repeat.</text>
</comment>
<comment type="PTM">
    <text evidence="1">O-glycosylated on hydroxyprolines.</text>
</comment>
<comment type="disruption phenotype">
    <text evidence="4 5">Irregular root hair development that frequently abort, swell, or branch. Stronger phenotype when associated with LRX2 disruption; frequent rupture of root hairs soon after their initiation.</text>
</comment>
<keyword id="KW-0134">Cell wall</keyword>
<keyword id="KW-0961">Cell wall biogenesis/degradation</keyword>
<keyword id="KW-0217">Developmental protein</keyword>
<keyword id="KW-0325">Glycoprotein</keyword>
<keyword id="KW-0379">Hydroxylation</keyword>
<keyword id="KW-0433">Leucine-rich repeat</keyword>
<keyword id="KW-1185">Reference proteome</keyword>
<keyword id="KW-0677">Repeat</keyword>
<keyword id="KW-0964">Secreted</keyword>
<keyword id="KW-0732">Signal</keyword>
<organism>
    <name type="scientific">Arabidopsis thaliana</name>
    <name type="common">Mouse-ear cress</name>
    <dbReference type="NCBI Taxonomy" id="3702"/>
    <lineage>
        <taxon>Eukaryota</taxon>
        <taxon>Viridiplantae</taxon>
        <taxon>Streptophyta</taxon>
        <taxon>Embryophyta</taxon>
        <taxon>Tracheophyta</taxon>
        <taxon>Spermatophyta</taxon>
        <taxon>Magnoliopsida</taxon>
        <taxon>eudicotyledons</taxon>
        <taxon>Gunneridae</taxon>
        <taxon>Pentapetalae</taxon>
        <taxon>rosids</taxon>
        <taxon>malvids</taxon>
        <taxon>Brassicales</taxon>
        <taxon>Brassicaceae</taxon>
        <taxon>Camelineae</taxon>
        <taxon>Arabidopsis</taxon>
    </lineage>
</organism>
<protein>
    <recommendedName>
        <fullName>Leucine-rich repeat extensin-like protein 1</fullName>
        <shortName>AtLRX1</shortName>
        <shortName>LRR/EXTENSIN1</shortName>
    </recommendedName>
    <alternativeName>
        <fullName>Cell wall hydroxyproline-rich glycoprotein</fullName>
    </alternativeName>
</protein>
<feature type="signal peptide" evidence="2">
    <location>
        <begin position="1"/>
        <end position="26"/>
    </location>
</feature>
<feature type="chain" id="PRO_0000395461" description="Leucine-rich repeat extensin-like protein 1">
    <location>
        <begin position="27"/>
        <end position="744"/>
    </location>
</feature>
<feature type="repeat" description="LRR 1">
    <location>
        <begin position="122"/>
        <end position="145"/>
    </location>
</feature>
<feature type="repeat" description="LRR 2">
    <location>
        <begin position="147"/>
        <end position="170"/>
    </location>
</feature>
<feature type="repeat" description="LRR 3">
    <location>
        <begin position="171"/>
        <end position="194"/>
    </location>
</feature>
<feature type="repeat" description="LRR 4">
    <location>
        <begin position="196"/>
        <end position="217"/>
    </location>
</feature>
<feature type="repeat" description="LRR 5">
    <location>
        <begin position="219"/>
        <end position="240"/>
    </location>
</feature>
<feature type="repeat" description="LRR 6">
    <location>
        <begin position="241"/>
        <end position="265"/>
    </location>
</feature>
<feature type="repeat" description="LRR 7">
    <location>
        <begin position="266"/>
        <end position="289"/>
    </location>
</feature>
<feature type="repeat" description="LRR 8">
    <location>
        <begin position="290"/>
        <end position="313"/>
    </location>
</feature>
<feature type="repeat" description="LRR 9">
    <location>
        <begin position="315"/>
        <end position="336"/>
    </location>
</feature>
<feature type="repeat" description="LRR 10">
    <location>
        <begin position="381"/>
        <end position="404"/>
    </location>
</feature>
<feature type="region of interest" description="Contains the Ser-Pro(4) repeats">
    <location>
        <begin position="382"/>
        <end position="744"/>
    </location>
</feature>
<feature type="region of interest" description="Disordered" evidence="3">
    <location>
        <begin position="408"/>
        <end position="445"/>
    </location>
</feature>
<feature type="region of interest" description="Disordered" evidence="3">
    <location>
        <begin position="518"/>
        <end position="537"/>
    </location>
</feature>
<feature type="region of interest" description="Disordered" evidence="3">
    <location>
        <begin position="555"/>
        <end position="576"/>
    </location>
</feature>
<feature type="region of interest" description="Disordered" evidence="3">
    <location>
        <begin position="658"/>
        <end position="744"/>
    </location>
</feature>
<feature type="compositionally biased region" description="Low complexity" evidence="3">
    <location>
        <begin position="430"/>
        <end position="439"/>
    </location>
</feature>
<feature type="compositionally biased region" description="Pro residues" evidence="3">
    <location>
        <begin position="704"/>
        <end position="729"/>
    </location>
</feature>
<feature type="glycosylation site" description="N-linked (GlcNAc...) asparagine" evidence="2">
    <location>
        <position position="71"/>
    </location>
</feature>
<feature type="glycosylation site" description="N-linked (GlcNAc...) asparagine" evidence="2">
    <location>
        <position position="77"/>
    </location>
</feature>
<feature type="glycosylation site" description="N-linked (GlcNAc...) asparagine" evidence="2">
    <location>
        <position position="253"/>
    </location>
</feature>
<feature type="glycosylation site" description="N-linked (GlcNAc...) asparagine" evidence="2">
    <location>
        <position position="318"/>
    </location>
</feature>
<feature type="glycosylation site" description="N-linked (GlcNAc...) asparagine" evidence="2">
    <location>
        <position position="344"/>
    </location>
</feature>